<keyword id="KW-0488">Methylation</keyword>
<keyword id="KW-0687">Ribonucleoprotein</keyword>
<keyword id="KW-0689">Ribosomal protein</keyword>
<keyword id="KW-0694">RNA-binding</keyword>
<keyword id="KW-0699">rRNA-binding</keyword>
<keyword id="KW-0820">tRNA-binding</keyword>
<proteinExistence type="inferred from homology"/>
<sequence length="140" mass="15446">MPTINQLVRNGRTDKVWKSKSPALNKGFNSLKKKSTDISAPQKRGVCTRVGTMTPKKPNSALRKYARVRLTNGIEVTAYIPGIGHNLQEHSVVLIRGGRVKDLPGVRYHIVRGALDTAGVDKRMQGRSKYGTKKPKAAKK</sequence>
<gene>
    <name evidence="2" type="primary">rpsL</name>
    <name type="ordered locus">BCE33L0099</name>
</gene>
<organism>
    <name type="scientific">Bacillus cereus (strain ZK / E33L)</name>
    <dbReference type="NCBI Taxonomy" id="288681"/>
    <lineage>
        <taxon>Bacteria</taxon>
        <taxon>Bacillati</taxon>
        <taxon>Bacillota</taxon>
        <taxon>Bacilli</taxon>
        <taxon>Bacillales</taxon>
        <taxon>Bacillaceae</taxon>
        <taxon>Bacillus</taxon>
        <taxon>Bacillus cereus group</taxon>
    </lineage>
</organism>
<name>RS12_BACCZ</name>
<feature type="chain" id="PRO_0000146171" description="Small ribosomal subunit protein uS12">
    <location>
        <begin position="1"/>
        <end position="140"/>
    </location>
</feature>
<feature type="modified residue" description="3-methylthioaspartic acid" evidence="1">
    <location>
        <position position="102"/>
    </location>
</feature>
<dbReference type="EMBL" id="CP000001">
    <property type="protein sequence ID" value="AAU20131.1"/>
    <property type="molecule type" value="Genomic_DNA"/>
</dbReference>
<dbReference type="RefSeq" id="WP_001142340.1">
    <property type="nucleotide sequence ID" value="NZ_CP009968.1"/>
</dbReference>
<dbReference type="SMR" id="Q63H95"/>
<dbReference type="GeneID" id="93010948"/>
<dbReference type="KEGG" id="bcz:BCE33L0099"/>
<dbReference type="PATRIC" id="fig|288681.22.peg.52"/>
<dbReference type="Proteomes" id="UP000002612">
    <property type="component" value="Chromosome"/>
</dbReference>
<dbReference type="GO" id="GO:0015935">
    <property type="term" value="C:small ribosomal subunit"/>
    <property type="evidence" value="ECO:0007669"/>
    <property type="project" value="InterPro"/>
</dbReference>
<dbReference type="GO" id="GO:0019843">
    <property type="term" value="F:rRNA binding"/>
    <property type="evidence" value="ECO:0007669"/>
    <property type="project" value="UniProtKB-UniRule"/>
</dbReference>
<dbReference type="GO" id="GO:0003735">
    <property type="term" value="F:structural constituent of ribosome"/>
    <property type="evidence" value="ECO:0007669"/>
    <property type="project" value="InterPro"/>
</dbReference>
<dbReference type="GO" id="GO:0000049">
    <property type="term" value="F:tRNA binding"/>
    <property type="evidence" value="ECO:0007669"/>
    <property type="project" value="UniProtKB-UniRule"/>
</dbReference>
<dbReference type="GO" id="GO:0006412">
    <property type="term" value="P:translation"/>
    <property type="evidence" value="ECO:0007669"/>
    <property type="project" value="UniProtKB-UniRule"/>
</dbReference>
<dbReference type="CDD" id="cd03368">
    <property type="entry name" value="Ribosomal_S12"/>
    <property type="match status" value="1"/>
</dbReference>
<dbReference type="FunFam" id="2.40.50.140:FF:000001">
    <property type="entry name" value="30S ribosomal protein S12"/>
    <property type="match status" value="1"/>
</dbReference>
<dbReference type="Gene3D" id="2.40.50.140">
    <property type="entry name" value="Nucleic acid-binding proteins"/>
    <property type="match status" value="1"/>
</dbReference>
<dbReference type="HAMAP" id="MF_00403_B">
    <property type="entry name" value="Ribosomal_uS12_B"/>
    <property type="match status" value="1"/>
</dbReference>
<dbReference type="InterPro" id="IPR012340">
    <property type="entry name" value="NA-bd_OB-fold"/>
</dbReference>
<dbReference type="InterPro" id="IPR006032">
    <property type="entry name" value="Ribosomal_uS12"/>
</dbReference>
<dbReference type="InterPro" id="IPR005679">
    <property type="entry name" value="Ribosomal_uS12_bac"/>
</dbReference>
<dbReference type="NCBIfam" id="TIGR00981">
    <property type="entry name" value="rpsL_bact"/>
    <property type="match status" value="1"/>
</dbReference>
<dbReference type="PANTHER" id="PTHR11652">
    <property type="entry name" value="30S RIBOSOMAL PROTEIN S12 FAMILY MEMBER"/>
    <property type="match status" value="1"/>
</dbReference>
<dbReference type="Pfam" id="PF00164">
    <property type="entry name" value="Ribosom_S12_S23"/>
    <property type="match status" value="1"/>
</dbReference>
<dbReference type="PRINTS" id="PR01034">
    <property type="entry name" value="RIBOSOMALS12"/>
</dbReference>
<dbReference type="SUPFAM" id="SSF50249">
    <property type="entry name" value="Nucleic acid-binding proteins"/>
    <property type="match status" value="1"/>
</dbReference>
<dbReference type="PROSITE" id="PS00055">
    <property type="entry name" value="RIBOSOMAL_S12"/>
    <property type="match status" value="1"/>
</dbReference>
<accession>Q63H95</accession>
<protein>
    <recommendedName>
        <fullName evidence="2">Small ribosomal subunit protein uS12</fullName>
    </recommendedName>
    <alternativeName>
        <fullName evidence="3">30S ribosomal protein S12</fullName>
    </alternativeName>
</protein>
<comment type="function">
    <text evidence="2">With S4 and S5 plays an important role in translational accuracy.</text>
</comment>
<comment type="function">
    <text evidence="2">Interacts with and stabilizes bases of the 16S rRNA that are involved in tRNA selection in the A site and with the mRNA backbone. Located at the interface of the 30S and 50S subunits, it traverses the body of the 30S subunit contacting proteins on the other side and probably holding the rRNA structure together. The combined cluster of proteins S8, S12 and S17 appears to hold together the shoulder and platform of the 30S subunit.</text>
</comment>
<comment type="subunit">
    <text evidence="2">Part of the 30S ribosomal subunit. Contacts proteins S8 and S17. May interact with IF1 in the 30S initiation complex.</text>
</comment>
<comment type="similarity">
    <text evidence="2">Belongs to the universal ribosomal protein uS12 family.</text>
</comment>
<reference key="1">
    <citation type="journal article" date="2006" name="J. Bacteriol.">
        <title>Pathogenomic sequence analysis of Bacillus cereus and Bacillus thuringiensis isolates closely related to Bacillus anthracis.</title>
        <authorList>
            <person name="Han C.S."/>
            <person name="Xie G."/>
            <person name="Challacombe J.F."/>
            <person name="Altherr M.R."/>
            <person name="Bhotika S.S."/>
            <person name="Bruce D."/>
            <person name="Campbell C.S."/>
            <person name="Campbell M.L."/>
            <person name="Chen J."/>
            <person name="Chertkov O."/>
            <person name="Cleland C."/>
            <person name="Dimitrijevic M."/>
            <person name="Doggett N.A."/>
            <person name="Fawcett J.J."/>
            <person name="Glavina T."/>
            <person name="Goodwin L.A."/>
            <person name="Hill K.K."/>
            <person name="Hitchcock P."/>
            <person name="Jackson P.J."/>
            <person name="Keim P."/>
            <person name="Kewalramani A.R."/>
            <person name="Longmire J."/>
            <person name="Lucas S."/>
            <person name="Malfatti S."/>
            <person name="McMurry K."/>
            <person name="Meincke L.J."/>
            <person name="Misra M."/>
            <person name="Moseman B.L."/>
            <person name="Mundt M."/>
            <person name="Munk A.C."/>
            <person name="Okinaka R.T."/>
            <person name="Parson-Quintana B."/>
            <person name="Reilly L.P."/>
            <person name="Richardson P."/>
            <person name="Robinson D.L."/>
            <person name="Rubin E."/>
            <person name="Saunders E."/>
            <person name="Tapia R."/>
            <person name="Tesmer J.G."/>
            <person name="Thayer N."/>
            <person name="Thompson L.S."/>
            <person name="Tice H."/>
            <person name="Ticknor L.O."/>
            <person name="Wills P.L."/>
            <person name="Brettin T.S."/>
            <person name="Gilna P."/>
        </authorList>
    </citation>
    <scope>NUCLEOTIDE SEQUENCE [LARGE SCALE GENOMIC DNA]</scope>
    <source>
        <strain>ZK / E33L</strain>
    </source>
</reference>
<evidence type="ECO:0000250" key="1"/>
<evidence type="ECO:0000255" key="2">
    <source>
        <dbReference type="HAMAP-Rule" id="MF_00403"/>
    </source>
</evidence>
<evidence type="ECO:0000305" key="3"/>